<proteinExistence type="inferred from homology"/>
<organism>
    <name type="scientific">Nematostella vectensis</name>
    <name type="common">Starlet sea anemone</name>
    <dbReference type="NCBI Taxonomy" id="45351"/>
    <lineage>
        <taxon>Eukaryota</taxon>
        <taxon>Metazoa</taxon>
        <taxon>Cnidaria</taxon>
        <taxon>Anthozoa</taxon>
        <taxon>Hexacorallia</taxon>
        <taxon>Actiniaria</taxon>
        <taxon>Edwardsiidae</taxon>
        <taxon>Nematostella</taxon>
    </lineage>
</organism>
<evidence type="ECO:0000250" key="1">
    <source>
        <dbReference type="UniProtKB" id="Q22875"/>
    </source>
</evidence>
<evidence type="ECO:0000256" key="2">
    <source>
        <dbReference type="SAM" id="MobiDB-lite"/>
    </source>
</evidence>
<evidence type="ECO:0000305" key="3"/>
<name>SHOC2_NEMVE</name>
<sequence length="577" mass="64239">MRRTKGRTDSPDVQSLNINADYGEAASLTADDSTAHKSDKKHDPEAKKQVTITVQPGVKPKPTVKKRSTPSADLDIHKEIQKCREEGATRLDLSKAAVTVLPKELKELTSLRELYLYGNRIAVLPPEVGLLPNLETLALSENNLTTLPDNLVKLTKLKVLDLRHNKIKEIPDVIYKLTTLTTLYLRFNRISVVESGIGNLKLLERLSLRENKIKILPRVIGQLVHLVTLDISHNHIENLPAEIGNCVHMTSLDLQHNDIPSLPDSIGRLTAMTRLGLRYNQLSSLPDSLANCSGIDEFNIEGNNIAELPEKLLSSLKNLTSLTLSRNKFEVFPAGPPKQFCQVNTFIMEHNRMQKIPFGVFNKAKYLSKLNVKDNQLTSLPLDFGSWISLVELNVATNQISKLPEDIQWLVNLEVLILSNNLLKKLPRGIGALRKLRVLDIEENKLESIPTEIEYLRSLERLVLQSNCLGSLPRSIGYLSSVTYLSVGENELVSVPQEIGNMESLEQLYLNDNENLQSLPYELVLCGSLQIMSIENCPLSALPSQIVAGGPSLVIQYLRLQGPYNGMVDTGVPTSDV</sequence>
<comment type="function">
    <text evidence="1">Acts as a Ras effector and participates in MAPK pathway activation. Probably acts as a scaffolding protein in a protein phosphatase complex that specifically dephosphorylates Raf kinase and stimulate Raf activity at specialized signaling complexes upon Ras activation (By similarity).</text>
</comment>
<comment type="similarity">
    <text evidence="3">Belongs to the SHOC2 family.</text>
</comment>
<accession>A7SFP1</accession>
<dbReference type="EMBL" id="DS469645">
    <property type="protein sequence ID" value="EDO37499.1"/>
    <property type="molecule type" value="Genomic_DNA"/>
</dbReference>
<dbReference type="SMR" id="A7SFP1"/>
<dbReference type="STRING" id="45351.A7SFP1"/>
<dbReference type="EnsemblMetazoa" id="EDO37499">
    <property type="protein sequence ID" value="EDO37499"/>
    <property type="gene ID" value="NEMVEDRAFT_v1g189306"/>
</dbReference>
<dbReference type="KEGG" id="nve:5509046"/>
<dbReference type="eggNOG" id="KOG0619">
    <property type="taxonomic scope" value="Eukaryota"/>
</dbReference>
<dbReference type="HOGENOM" id="CLU_000288_18_23_1"/>
<dbReference type="InParanoid" id="A7SFP1"/>
<dbReference type="OMA" id="NQFTSYP"/>
<dbReference type="OrthoDB" id="676979at2759"/>
<dbReference type="PhylomeDB" id="A7SFP1"/>
<dbReference type="Proteomes" id="UP000001593">
    <property type="component" value="Unassembled WGS sequence"/>
</dbReference>
<dbReference type="GO" id="GO:0005225">
    <property type="term" value="F:volume-sensitive anion channel activity"/>
    <property type="evidence" value="ECO:0000318"/>
    <property type="project" value="GO_Central"/>
</dbReference>
<dbReference type="GO" id="GO:0035556">
    <property type="term" value="P:intracellular signal transduction"/>
    <property type="evidence" value="ECO:0000318"/>
    <property type="project" value="GO_Central"/>
</dbReference>
<dbReference type="FunFam" id="3.80.10.10:FF:000281">
    <property type="entry name" value="Leucine-rich repeat protein soc-2"/>
    <property type="match status" value="1"/>
</dbReference>
<dbReference type="Gene3D" id="3.80.10.10">
    <property type="entry name" value="Ribonuclease Inhibitor"/>
    <property type="match status" value="4"/>
</dbReference>
<dbReference type="InterPro" id="IPR001611">
    <property type="entry name" value="Leu-rich_rpt"/>
</dbReference>
<dbReference type="InterPro" id="IPR003591">
    <property type="entry name" value="Leu-rich_rpt_typical-subtyp"/>
</dbReference>
<dbReference type="InterPro" id="IPR032675">
    <property type="entry name" value="LRR_dom_sf"/>
</dbReference>
<dbReference type="InterPro" id="IPR050216">
    <property type="entry name" value="LRR_domain-containing"/>
</dbReference>
<dbReference type="InterPro" id="IPR055414">
    <property type="entry name" value="LRR_R13L4/SHOC2-like"/>
</dbReference>
<dbReference type="PANTHER" id="PTHR48051">
    <property type="match status" value="1"/>
</dbReference>
<dbReference type="PANTHER" id="PTHR48051:SF54">
    <property type="entry name" value="LEUCINE-RICH REPEAT-CONTAINING PROTEIN"/>
    <property type="match status" value="1"/>
</dbReference>
<dbReference type="Pfam" id="PF23598">
    <property type="entry name" value="LRR_14"/>
    <property type="match status" value="2"/>
</dbReference>
<dbReference type="Pfam" id="PF13855">
    <property type="entry name" value="LRR_8"/>
    <property type="match status" value="1"/>
</dbReference>
<dbReference type="SMART" id="SM00364">
    <property type="entry name" value="LRR_BAC"/>
    <property type="match status" value="13"/>
</dbReference>
<dbReference type="SMART" id="SM00365">
    <property type="entry name" value="LRR_SD22"/>
    <property type="match status" value="7"/>
</dbReference>
<dbReference type="SMART" id="SM00369">
    <property type="entry name" value="LRR_TYP"/>
    <property type="match status" value="14"/>
</dbReference>
<dbReference type="SUPFAM" id="SSF52058">
    <property type="entry name" value="L domain-like"/>
    <property type="match status" value="2"/>
</dbReference>
<dbReference type="PROSITE" id="PS51450">
    <property type="entry name" value="LRR"/>
    <property type="match status" value="16"/>
</dbReference>
<gene>
    <name type="ORF">v1g189306</name>
</gene>
<keyword id="KW-0433">Leucine-rich repeat</keyword>
<keyword id="KW-1185">Reference proteome</keyword>
<keyword id="KW-0677">Repeat</keyword>
<protein>
    <recommendedName>
        <fullName>Leucine-rich repeat protein soc-2 homolog</fullName>
    </recommendedName>
</protein>
<feature type="chain" id="PRO_0000385632" description="Leucine-rich repeat protein soc-2 homolog">
    <location>
        <begin position="1"/>
        <end position="577"/>
    </location>
</feature>
<feature type="repeat" description="LRR 1">
    <location>
        <begin position="87"/>
        <end position="109"/>
    </location>
</feature>
<feature type="repeat" description="LRR 2">
    <location>
        <begin position="110"/>
        <end position="131"/>
    </location>
</feature>
<feature type="repeat" description="LRR 3">
    <location>
        <begin position="133"/>
        <end position="155"/>
    </location>
</feature>
<feature type="repeat" description="LRR 4">
    <location>
        <begin position="156"/>
        <end position="177"/>
    </location>
</feature>
<feature type="repeat" description="LRR 5">
    <location>
        <begin position="179"/>
        <end position="201"/>
    </location>
</feature>
<feature type="repeat" description="LRR 6">
    <location>
        <begin position="202"/>
        <end position="223"/>
    </location>
</feature>
<feature type="repeat" description="LRR 7">
    <location>
        <begin position="225"/>
        <end position="246"/>
    </location>
</feature>
<feature type="repeat" description="LRR 8">
    <location>
        <begin position="248"/>
        <end position="269"/>
    </location>
</feature>
<feature type="repeat" description="LRR 9">
    <location>
        <begin position="271"/>
        <end position="292"/>
    </location>
</feature>
<feature type="repeat" description="LRR 10">
    <location>
        <begin position="294"/>
        <end position="315"/>
    </location>
</feature>
<feature type="repeat" description="LRR 11">
    <location>
        <begin position="318"/>
        <end position="339"/>
    </location>
</feature>
<feature type="repeat" description="LRR 12">
    <location>
        <begin position="342"/>
        <end position="363"/>
    </location>
</feature>
<feature type="repeat" description="LRR 13">
    <location>
        <begin position="366"/>
        <end position="387"/>
    </location>
</feature>
<feature type="repeat" description="LRR 14">
    <location>
        <begin position="389"/>
        <end position="410"/>
    </location>
</feature>
<feature type="repeat" description="LRR 15">
    <location>
        <begin position="412"/>
        <end position="434"/>
    </location>
</feature>
<feature type="repeat" description="LRR 16">
    <location>
        <begin position="435"/>
        <end position="456"/>
    </location>
</feature>
<feature type="repeat" description="LRR 17">
    <location>
        <begin position="458"/>
        <end position="479"/>
    </location>
</feature>
<feature type="repeat" description="LRR 18">
    <location>
        <begin position="481"/>
        <end position="502"/>
    </location>
</feature>
<feature type="repeat" description="LRR 19">
    <location>
        <begin position="504"/>
        <end position="526"/>
    </location>
</feature>
<feature type="repeat" description="LRR 20">
    <location>
        <begin position="528"/>
        <end position="549"/>
    </location>
</feature>
<feature type="region of interest" description="Disordered" evidence="2">
    <location>
        <begin position="1"/>
        <end position="71"/>
    </location>
</feature>
<feature type="compositionally biased region" description="Basic and acidic residues" evidence="2">
    <location>
        <begin position="1"/>
        <end position="10"/>
    </location>
</feature>
<feature type="compositionally biased region" description="Basic and acidic residues" evidence="2">
    <location>
        <begin position="33"/>
        <end position="48"/>
    </location>
</feature>
<reference key="1">
    <citation type="journal article" date="2007" name="Science">
        <title>Sea anemone genome reveals ancestral eumetazoan gene repertoire and genomic organization.</title>
        <authorList>
            <person name="Putnam N.H."/>
            <person name="Srivastava M."/>
            <person name="Hellsten U."/>
            <person name="Dirks B."/>
            <person name="Chapman J."/>
            <person name="Salamov A."/>
            <person name="Terry A."/>
            <person name="Shapiro H."/>
            <person name="Lindquist E."/>
            <person name="Kapitonov V.V."/>
            <person name="Jurka J."/>
            <person name="Genikhovich G."/>
            <person name="Grigoriev I.V."/>
            <person name="Lucas S.M."/>
            <person name="Steele R.E."/>
            <person name="Finnerty J.R."/>
            <person name="Technau U."/>
            <person name="Martindale M.Q."/>
            <person name="Rokhsar D.S."/>
        </authorList>
    </citation>
    <scope>NUCLEOTIDE SEQUENCE [LARGE SCALE GENOMIC DNA]</scope>
    <source>
        <strain>CH2 X CH6</strain>
    </source>
</reference>